<sequence length="330" mass="35823">MQTLAQHLTSQAVNDSLSQLILTLADTSKAISHAVRHGALAGVLGATEQENVQGETQKKLDIITNDMLKDALKADGTVRGLASEEEDHVVEVSTNGQYLVCFDPLDGSSNIDINSLVGTIFSILPASAGELTETSFLQSGRNQLAAGYVLYGPSTMLALTTGQGVQLFTLHPETNEFLLTNAAMSISADTQEFAINMSNQRFWEAPMQTYIADLLLGKIGPREKSFNMRWIAAMVGDVHRVLSRGGIFTYPTDNKDPKKPYKLRLMYEANPMAFLVEQAGGKASTGYETILDIQPTHIHQRVAVILGSANEVDACLSYHGLDYSEEPGLD</sequence>
<organism>
    <name type="scientific">Shewanella sp. (strain W3-18-1)</name>
    <dbReference type="NCBI Taxonomy" id="351745"/>
    <lineage>
        <taxon>Bacteria</taxon>
        <taxon>Pseudomonadati</taxon>
        <taxon>Pseudomonadota</taxon>
        <taxon>Gammaproteobacteria</taxon>
        <taxon>Alteromonadales</taxon>
        <taxon>Shewanellaceae</taxon>
        <taxon>Shewanella</taxon>
    </lineage>
</organism>
<feature type="chain" id="PRO_0000364714" description="Fructose-1,6-bisphosphatase class 1">
    <location>
        <begin position="1"/>
        <end position="330"/>
    </location>
</feature>
<feature type="binding site" evidence="1">
    <location>
        <position position="84"/>
    </location>
    <ligand>
        <name>Mg(2+)</name>
        <dbReference type="ChEBI" id="CHEBI:18420"/>
        <label>1</label>
    </ligand>
</feature>
<feature type="binding site" evidence="1">
    <location>
        <position position="103"/>
    </location>
    <ligand>
        <name>Mg(2+)</name>
        <dbReference type="ChEBI" id="CHEBI:18420"/>
        <label>1</label>
    </ligand>
</feature>
<feature type="binding site" evidence="1">
    <location>
        <position position="103"/>
    </location>
    <ligand>
        <name>Mg(2+)</name>
        <dbReference type="ChEBI" id="CHEBI:18420"/>
        <label>2</label>
    </ligand>
</feature>
<feature type="binding site" evidence="1">
    <location>
        <position position="105"/>
    </location>
    <ligand>
        <name>Mg(2+)</name>
        <dbReference type="ChEBI" id="CHEBI:18420"/>
        <label>1</label>
    </ligand>
</feature>
<feature type="binding site" evidence="1">
    <location>
        <begin position="106"/>
        <end position="109"/>
    </location>
    <ligand>
        <name>substrate</name>
    </ligand>
</feature>
<feature type="binding site" evidence="1">
    <location>
        <position position="106"/>
    </location>
    <ligand>
        <name>Mg(2+)</name>
        <dbReference type="ChEBI" id="CHEBI:18420"/>
        <label>2</label>
    </ligand>
</feature>
<feature type="binding site" evidence="1">
    <location>
        <position position="196"/>
    </location>
    <ligand>
        <name>substrate</name>
    </ligand>
</feature>
<feature type="binding site" evidence="1">
    <location>
        <position position="262"/>
    </location>
    <ligand>
        <name>substrate</name>
    </ligand>
</feature>
<feature type="binding site" evidence="1">
    <location>
        <position position="268"/>
    </location>
    <ligand>
        <name>Mg(2+)</name>
        <dbReference type="ChEBI" id="CHEBI:18420"/>
        <label>2</label>
    </ligand>
</feature>
<dbReference type="EC" id="3.1.3.11" evidence="1"/>
<dbReference type="EMBL" id="CP000503">
    <property type="protein sequence ID" value="ABM26307.1"/>
    <property type="molecule type" value="Genomic_DNA"/>
</dbReference>
<dbReference type="RefSeq" id="WP_011790743.1">
    <property type="nucleotide sequence ID" value="NC_008750.1"/>
</dbReference>
<dbReference type="SMR" id="A1RNR2"/>
<dbReference type="KEGG" id="shw:Sputw3181_3495"/>
<dbReference type="HOGENOM" id="CLU_039977_0_0_6"/>
<dbReference type="UniPathway" id="UPA00138"/>
<dbReference type="Proteomes" id="UP000002597">
    <property type="component" value="Chromosome"/>
</dbReference>
<dbReference type="GO" id="GO:0005829">
    <property type="term" value="C:cytosol"/>
    <property type="evidence" value="ECO:0007669"/>
    <property type="project" value="TreeGrafter"/>
</dbReference>
<dbReference type="GO" id="GO:0042132">
    <property type="term" value="F:fructose 1,6-bisphosphate 1-phosphatase activity"/>
    <property type="evidence" value="ECO:0007669"/>
    <property type="project" value="UniProtKB-UniRule"/>
</dbReference>
<dbReference type="GO" id="GO:0000287">
    <property type="term" value="F:magnesium ion binding"/>
    <property type="evidence" value="ECO:0007669"/>
    <property type="project" value="UniProtKB-UniRule"/>
</dbReference>
<dbReference type="GO" id="GO:0030388">
    <property type="term" value="P:fructose 1,6-bisphosphate metabolic process"/>
    <property type="evidence" value="ECO:0007669"/>
    <property type="project" value="TreeGrafter"/>
</dbReference>
<dbReference type="GO" id="GO:0006002">
    <property type="term" value="P:fructose 6-phosphate metabolic process"/>
    <property type="evidence" value="ECO:0007669"/>
    <property type="project" value="TreeGrafter"/>
</dbReference>
<dbReference type="GO" id="GO:0006000">
    <property type="term" value="P:fructose metabolic process"/>
    <property type="evidence" value="ECO:0007669"/>
    <property type="project" value="TreeGrafter"/>
</dbReference>
<dbReference type="GO" id="GO:0006094">
    <property type="term" value="P:gluconeogenesis"/>
    <property type="evidence" value="ECO:0007669"/>
    <property type="project" value="UniProtKB-UniRule"/>
</dbReference>
<dbReference type="GO" id="GO:0005986">
    <property type="term" value="P:sucrose biosynthetic process"/>
    <property type="evidence" value="ECO:0007669"/>
    <property type="project" value="TreeGrafter"/>
</dbReference>
<dbReference type="CDD" id="cd00354">
    <property type="entry name" value="FBPase"/>
    <property type="match status" value="1"/>
</dbReference>
<dbReference type="FunFam" id="3.30.540.10:FF:000002">
    <property type="entry name" value="Fructose-1,6-bisphosphatase class 1"/>
    <property type="match status" value="1"/>
</dbReference>
<dbReference type="FunFam" id="3.40.190.80:FF:000011">
    <property type="entry name" value="Fructose-1,6-bisphosphatase class 1"/>
    <property type="match status" value="1"/>
</dbReference>
<dbReference type="Gene3D" id="3.40.190.80">
    <property type="match status" value="1"/>
</dbReference>
<dbReference type="Gene3D" id="3.30.540.10">
    <property type="entry name" value="Fructose-1,6-Bisphosphatase, subunit A, domain 1"/>
    <property type="match status" value="1"/>
</dbReference>
<dbReference type="HAMAP" id="MF_01855">
    <property type="entry name" value="FBPase_class1"/>
    <property type="match status" value="1"/>
</dbReference>
<dbReference type="InterPro" id="IPR044015">
    <property type="entry name" value="FBPase_C_dom"/>
</dbReference>
<dbReference type="InterPro" id="IPR000146">
    <property type="entry name" value="FBPase_class-1"/>
</dbReference>
<dbReference type="InterPro" id="IPR033391">
    <property type="entry name" value="FBPase_N"/>
</dbReference>
<dbReference type="InterPro" id="IPR028343">
    <property type="entry name" value="FBPtase"/>
</dbReference>
<dbReference type="NCBIfam" id="NF006779">
    <property type="entry name" value="PRK09293.1-3"/>
    <property type="match status" value="1"/>
</dbReference>
<dbReference type="NCBIfam" id="NF006780">
    <property type="entry name" value="PRK09293.1-4"/>
    <property type="match status" value="1"/>
</dbReference>
<dbReference type="PANTHER" id="PTHR11556">
    <property type="entry name" value="FRUCTOSE-1,6-BISPHOSPHATASE-RELATED"/>
    <property type="match status" value="1"/>
</dbReference>
<dbReference type="PANTHER" id="PTHR11556:SF35">
    <property type="entry name" value="SEDOHEPTULOSE-1,7-BISPHOSPHATASE, CHLOROPLASTIC"/>
    <property type="match status" value="1"/>
</dbReference>
<dbReference type="Pfam" id="PF00316">
    <property type="entry name" value="FBPase"/>
    <property type="match status" value="1"/>
</dbReference>
<dbReference type="Pfam" id="PF18913">
    <property type="entry name" value="FBPase_C"/>
    <property type="match status" value="1"/>
</dbReference>
<dbReference type="PIRSF" id="PIRSF500210">
    <property type="entry name" value="FBPtase"/>
    <property type="match status" value="1"/>
</dbReference>
<dbReference type="PIRSF" id="PIRSF000904">
    <property type="entry name" value="FBPtase_SBPase"/>
    <property type="match status" value="1"/>
</dbReference>
<dbReference type="PRINTS" id="PR00115">
    <property type="entry name" value="F16BPHPHTASE"/>
</dbReference>
<dbReference type="SUPFAM" id="SSF56655">
    <property type="entry name" value="Carbohydrate phosphatase"/>
    <property type="match status" value="1"/>
</dbReference>
<protein>
    <recommendedName>
        <fullName evidence="1">Fructose-1,6-bisphosphatase class 1</fullName>
        <shortName evidence="1">FBPase class 1</shortName>
        <ecNumber evidence="1">3.1.3.11</ecNumber>
    </recommendedName>
    <alternativeName>
        <fullName evidence="1">D-fructose-1,6-bisphosphate 1-phosphohydrolase class 1</fullName>
    </alternativeName>
</protein>
<name>F16PA_SHESW</name>
<keyword id="KW-0119">Carbohydrate metabolism</keyword>
<keyword id="KW-0963">Cytoplasm</keyword>
<keyword id="KW-0378">Hydrolase</keyword>
<keyword id="KW-0460">Magnesium</keyword>
<keyword id="KW-0479">Metal-binding</keyword>
<comment type="catalytic activity">
    <reaction evidence="1">
        <text>beta-D-fructose 1,6-bisphosphate + H2O = beta-D-fructose 6-phosphate + phosphate</text>
        <dbReference type="Rhea" id="RHEA:11064"/>
        <dbReference type="ChEBI" id="CHEBI:15377"/>
        <dbReference type="ChEBI" id="CHEBI:32966"/>
        <dbReference type="ChEBI" id="CHEBI:43474"/>
        <dbReference type="ChEBI" id="CHEBI:57634"/>
        <dbReference type="EC" id="3.1.3.11"/>
    </reaction>
</comment>
<comment type="cofactor">
    <cofactor evidence="1">
        <name>Mg(2+)</name>
        <dbReference type="ChEBI" id="CHEBI:18420"/>
    </cofactor>
    <text evidence="1">Binds 2 magnesium ions per subunit.</text>
</comment>
<comment type="pathway">
    <text evidence="1">Carbohydrate biosynthesis; gluconeogenesis.</text>
</comment>
<comment type="subunit">
    <text evidence="1">Homotetramer.</text>
</comment>
<comment type="subcellular location">
    <subcellularLocation>
        <location evidence="1">Cytoplasm</location>
    </subcellularLocation>
</comment>
<comment type="similarity">
    <text evidence="1">Belongs to the FBPase class 1 family.</text>
</comment>
<proteinExistence type="inferred from homology"/>
<accession>A1RNR2</accession>
<evidence type="ECO:0000255" key="1">
    <source>
        <dbReference type="HAMAP-Rule" id="MF_01855"/>
    </source>
</evidence>
<reference key="1">
    <citation type="submission" date="2006-12" db="EMBL/GenBank/DDBJ databases">
        <title>Complete sequence of Shewanella sp. W3-18-1.</title>
        <authorList>
            <consortium name="US DOE Joint Genome Institute"/>
            <person name="Copeland A."/>
            <person name="Lucas S."/>
            <person name="Lapidus A."/>
            <person name="Barry K."/>
            <person name="Detter J.C."/>
            <person name="Glavina del Rio T."/>
            <person name="Hammon N."/>
            <person name="Israni S."/>
            <person name="Dalin E."/>
            <person name="Tice H."/>
            <person name="Pitluck S."/>
            <person name="Chain P."/>
            <person name="Malfatti S."/>
            <person name="Shin M."/>
            <person name="Vergez L."/>
            <person name="Schmutz J."/>
            <person name="Larimer F."/>
            <person name="Land M."/>
            <person name="Hauser L."/>
            <person name="Kyrpides N."/>
            <person name="Lykidis A."/>
            <person name="Tiedje J."/>
            <person name="Richardson P."/>
        </authorList>
    </citation>
    <scope>NUCLEOTIDE SEQUENCE [LARGE SCALE GENOMIC DNA]</scope>
    <source>
        <strain>W3-18-1</strain>
    </source>
</reference>
<gene>
    <name evidence="1" type="primary">fbp</name>
    <name type="ordered locus">Sputw3181_3495</name>
</gene>